<evidence type="ECO:0000255" key="1">
    <source>
        <dbReference type="HAMAP-Rule" id="MF_00500"/>
    </source>
</evidence>
<evidence type="ECO:0000256" key="2">
    <source>
        <dbReference type="SAM" id="MobiDB-lite"/>
    </source>
</evidence>
<evidence type="ECO:0000305" key="3"/>
<organism>
    <name type="scientific">Shewanella pealeana (strain ATCC 700345 / ANG-SQ1)</name>
    <dbReference type="NCBI Taxonomy" id="398579"/>
    <lineage>
        <taxon>Bacteria</taxon>
        <taxon>Pseudomonadati</taxon>
        <taxon>Pseudomonadota</taxon>
        <taxon>Gammaproteobacteria</taxon>
        <taxon>Alteromonadales</taxon>
        <taxon>Shewanellaceae</taxon>
        <taxon>Shewanella</taxon>
    </lineage>
</organism>
<protein>
    <recommendedName>
        <fullName evidence="1">Small ribosomal subunit protein bS20</fullName>
    </recommendedName>
    <alternativeName>
        <fullName evidence="3">30S ribosomal protein S20</fullName>
    </alternativeName>
</protein>
<comment type="function">
    <text evidence="1">Binds directly to 16S ribosomal RNA.</text>
</comment>
<comment type="similarity">
    <text evidence="1">Belongs to the bacterial ribosomal protein bS20 family.</text>
</comment>
<feature type="chain" id="PRO_1000081450" description="Small ribosomal subunit protein bS20">
    <location>
        <begin position="1"/>
        <end position="88"/>
    </location>
</feature>
<feature type="region of interest" description="Disordered" evidence="2">
    <location>
        <begin position="1"/>
        <end position="26"/>
    </location>
</feature>
<feature type="compositionally biased region" description="Basic residues" evidence="2">
    <location>
        <begin position="1"/>
        <end position="21"/>
    </location>
</feature>
<keyword id="KW-1185">Reference proteome</keyword>
<keyword id="KW-0687">Ribonucleoprotein</keyword>
<keyword id="KW-0689">Ribosomal protein</keyword>
<keyword id="KW-0694">RNA-binding</keyword>
<keyword id="KW-0699">rRNA-binding</keyword>
<dbReference type="EMBL" id="CP000851">
    <property type="protein sequence ID" value="ABV86407.1"/>
    <property type="molecule type" value="Genomic_DNA"/>
</dbReference>
<dbReference type="RefSeq" id="WP_012154338.1">
    <property type="nucleotide sequence ID" value="NC_009901.1"/>
</dbReference>
<dbReference type="SMR" id="A8H1H0"/>
<dbReference type="STRING" id="398579.Spea_1080"/>
<dbReference type="KEGG" id="spl:Spea_1080"/>
<dbReference type="eggNOG" id="COG0268">
    <property type="taxonomic scope" value="Bacteria"/>
</dbReference>
<dbReference type="HOGENOM" id="CLU_160655_4_0_6"/>
<dbReference type="OrthoDB" id="9807974at2"/>
<dbReference type="Proteomes" id="UP000002608">
    <property type="component" value="Chromosome"/>
</dbReference>
<dbReference type="GO" id="GO:0005829">
    <property type="term" value="C:cytosol"/>
    <property type="evidence" value="ECO:0007669"/>
    <property type="project" value="TreeGrafter"/>
</dbReference>
<dbReference type="GO" id="GO:0015935">
    <property type="term" value="C:small ribosomal subunit"/>
    <property type="evidence" value="ECO:0007669"/>
    <property type="project" value="TreeGrafter"/>
</dbReference>
<dbReference type="GO" id="GO:0070181">
    <property type="term" value="F:small ribosomal subunit rRNA binding"/>
    <property type="evidence" value="ECO:0007669"/>
    <property type="project" value="TreeGrafter"/>
</dbReference>
<dbReference type="GO" id="GO:0003735">
    <property type="term" value="F:structural constituent of ribosome"/>
    <property type="evidence" value="ECO:0007669"/>
    <property type="project" value="InterPro"/>
</dbReference>
<dbReference type="GO" id="GO:0006412">
    <property type="term" value="P:translation"/>
    <property type="evidence" value="ECO:0007669"/>
    <property type="project" value="UniProtKB-UniRule"/>
</dbReference>
<dbReference type="FunFam" id="1.20.58.110:FF:000001">
    <property type="entry name" value="30S ribosomal protein S20"/>
    <property type="match status" value="1"/>
</dbReference>
<dbReference type="Gene3D" id="1.20.58.110">
    <property type="entry name" value="Ribosomal protein S20"/>
    <property type="match status" value="1"/>
</dbReference>
<dbReference type="HAMAP" id="MF_00500">
    <property type="entry name" value="Ribosomal_bS20"/>
    <property type="match status" value="1"/>
</dbReference>
<dbReference type="InterPro" id="IPR002583">
    <property type="entry name" value="Ribosomal_bS20"/>
</dbReference>
<dbReference type="InterPro" id="IPR036510">
    <property type="entry name" value="Ribosomal_bS20_sf"/>
</dbReference>
<dbReference type="NCBIfam" id="TIGR00029">
    <property type="entry name" value="S20"/>
    <property type="match status" value="1"/>
</dbReference>
<dbReference type="PANTHER" id="PTHR33398">
    <property type="entry name" value="30S RIBOSOMAL PROTEIN S20"/>
    <property type="match status" value="1"/>
</dbReference>
<dbReference type="PANTHER" id="PTHR33398:SF1">
    <property type="entry name" value="SMALL RIBOSOMAL SUBUNIT PROTEIN BS20C"/>
    <property type="match status" value="1"/>
</dbReference>
<dbReference type="Pfam" id="PF01649">
    <property type="entry name" value="Ribosomal_S20p"/>
    <property type="match status" value="1"/>
</dbReference>
<dbReference type="SUPFAM" id="SSF46992">
    <property type="entry name" value="Ribosomal protein S20"/>
    <property type="match status" value="1"/>
</dbReference>
<accession>A8H1H0</accession>
<sequence>MANSKSAKKRALQSEKRRQHNASRSSMLRTYVKKVIAAINAGDHATATAAFAVAQPIVDRMATKGLIHKNKAARYKSRLNAKIKALVA</sequence>
<name>RS20_SHEPA</name>
<gene>
    <name evidence="1" type="primary">rpsT</name>
    <name type="ordered locus">Spea_1080</name>
</gene>
<proteinExistence type="inferred from homology"/>
<reference key="1">
    <citation type="submission" date="2007-10" db="EMBL/GenBank/DDBJ databases">
        <title>Complete sequence of Shewanella pealeana ATCC 700345.</title>
        <authorList>
            <consortium name="US DOE Joint Genome Institute"/>
            <person name="Copeland A."/>
            <person name="Lucas S."/>
            <person name="Lapidus A."/>
            <person name="Barry K."/>
            <person name="Glavina del Rio T."/>
            <person name="Dalin E."/>
            <person name="Tice H."/>
            <person name="Pitluck S."/>
            <person name="Chertkov O."/>
            <person name="Brettin T."/>
            <person name="Bruce D."/>
            <person name="Detter J.C."/>
            <person name="Han C."/>
            <person name="Schmutz J."/>
            <person name="Larimer F."/>
            <person name="Land M."/>
            <person name="Hauser L."/>
            <person name="Kyrpides N."/>
            <person name="Kim E."/>
            <person name="Zhao J.-S.Z."/>
            <person name="Manno D."/>
            <person name="Hawari J."/>
            <person name="Richardson P."/>
        </authorList>
    </citation>
    <scope>NUCLEOTIDE SEQUENCE [LARGE SCALE GENOMIC DNA]</scope>
    <source>
        <strain>ATCC 700345 / ANG-SQ1</strain>
    </source>
</reference>